<sequence>MANHKSAAKRARQSIRKTAVNNARKSTVKTAEKKLVKAIEAKDLKALPELLKNFSSQVMKAAKTGVIKKETASRKISRLSTRASATK</sequence>
<feature type="chain" id="PRO_0000167924" description="Small ribosomal subunit protein bS20">
    <location>
        <begin position="1"/>
        <end position="87"/>
    </location>
</feature>
<feature type="region of interest" description="Disordered" evidence="2">
    <location>
        <begin position="1"/>
        <end position="29"/>
    </location>
</feature>
<feature type="compositionally biased region" description="Basic residues" evidence="2">
    <location>
        <begin position="1"/>
        <end position="15"/>
    </location>
</feature>
<feature type="compositionally biased region" description="Polar residues" evidence="2">
    <location>
        <begin position="19"/>
        <end position="29"/>
    </location>
</feature>
<keyword id="KW-1185">Reference proteome</keyword>
<keyword id="KW-0687">Ribonucleoprotein</keyword>
<keyword id="KW-0689">Ribosomal protein</keyword>
<keyword id="KW-0694">RNA-binding</keyword>
<keyword id="KW-0699">rRNA-binding</keyword>
<comment type="function">
    <text evidence="1">Binds directly to 16S ribosomal RNA.</text>
</comment>
<comment type="similarity">
    <text evidence="1">Belongs to the bacterial ribosomal protein bS20 family.</text>
</comment>
<accession>Q6MMZ9</accession>
<reference key="1">
    <citation type="journal article" date="2004" name="Science">
        <title>A predator unmasked: life cycle of Bdellovibrio bacteriovorus from a genomic perspective.</title>
        <authorList>
            <person name="Rendulic S."/>
            <person name="Jagtap P."/>
            <person name="Rosinus A."/>
            <person name="Eppinger M."/>
            <person name="Baar C."/>
            <person name="Lanz C."/>
            <person name="Keller H."/>
            <person name="Lambert C."/>
            <person name="Evans K.J."/>
            <person name="Goesmann A."/>
            <person name="Meyer F."/>
            <person name="Sockett R.E."/>
            <person name="Schuster S.C."/>
        </authorList>
    </citation>
    <scope>NUCLEOTIDE SEQUENCE [LARGE SCALE GENOMIC DNA]</scope>
    <source>
        <strain>ATCC 15356 / DSM 50701 / NCIMB 9529 / HD100</strain>
    </source>
</reference>
<protein>
    <recommendedName>
        <fullName evidence="1">Small ribosomal subunit protein bS20</fullName>
    </recommendedName>
    <alternativeName>
        <fullName evidence="3">30S ribosomal protein S20</fullName>
    </alternativeName>
</protein>
<name>RS20_BDEBA</name>
<organism>
    <name type="scientific">Bdellovibrio bacteriovorus (strain ATCC 15356 / DSM 50701 / NCIMB 9529 / HD100)</name>
    <dbReference type="NCBI Taxonomy" id="264462"/>
    <lineage>
        <taxon>Bacteria</taxon>
        <taxon>Pseudomonadati</taxon>
        <taxon>Bdellovibrionota</taxon>
        <taxon>Bdellovibrionia</taxon>
        <taxon>Bdellovibrionales</taxon>
        <taxon>Pseudobdellovibrionaceae</taxon>
        <taxon>Bdellovibrio</taxon>
    </lineage>
</organism>
<proteinExistence type="inferred from homology"/>
<evidence type="ECO:0000255" key="1">
    <source>
        <dbReference type="HAMAP-Rule" id="MF_00500"/>
    </source>
</evidence>
<evidence type="ECO:0000256" key="2">
    <source>
        <dbReference type="SAM" id="MobiDB-lite"/>
    </source>
</evidence>
<evidence type="ECO:0000305" key="3"/>
<dbReference type="EMBL" id="BX842649">
    <property type="protein sequence ID" value="CAE79353.1"/>
    <property type="molecule type" value="Genomic_DNA"/>
</dbReference>
<dbReference type="RefSeq" id="WP_011163955.1">
    <property type="nucleotide sequence ID" value="NC_005363.1"/>
</dbReference>
<dbReference type="SMR" id="Q6MMZ9"/>
<dbReference type="STRING" id="264462.Bd1467"/>
<dbReference type="GeneID" id="93012472"/>
<dbReference type="KEGG" id="bba:Bd1467"/>
<dbReference type="eggNOG" id="COG0268">
    <property type="taxonomic scope" value="Bacteria"/>
</dbReference>
<dbReference type="HOGENOM" id="CLU_160655_3_0_7"/>
<dbReference type="Proteomes" id="UP000008080">
    <property type="component" value="Chromosome"/>
</dbReference>
<dbReference type="GO" id="GO:0015935">
    <property type="term" value="C:small ribosomal subunit"/>
    <property type="evidence" value="ECO:0007669"/>
    <property type="project" value="TreeGrafter"/>
</dbReference>
<dbReference type="GO" id="GO:0070181">
    <property type="term" value="F:small ribosomal subunit rRNA binding"/>
    <property type="evidence" value="ECO:0007669"/>
    <property type="project" value="TreeGrafter"/>
</dbReference>
<dbReference type="GO" id="GO:0003735">
    <property type="term" value="F:structural constituent of ribosome"/>
    <property type="evidence" value="ECO:0007669"/>
    <property type="project" value="InterPro"/>
</dbReference>
<dbReference type="GO" id="GO:0006412">
    <property type="term" value="P:translation"/>
    <property type="evidence" value="ECO:0007669"/>
    <property type="project" value="UniProtKB-UniRule"/>
</dbReference>
<dbReference type="Gene3D" id="1.20.58.110">
    <property type="entry name" value="Ribosomal protein S20"/>
    <property type="match status" value="1"/>
</dbReference>
<dbReference type="HAMAP" id="MF_00500">
    <property type="entry name" value="Ribosomal_bS20"/>
    <property type="match status" value="1"/>
</dbReference>
<dbReference type="InterPro" id="IPR002583">
    <property type="entry name" value="Ribosomal_bS20"/>
</dbReference>
<dbReference type="InterPro" id="IPR036510">
    <property type="entry name" value="Ribosomal_bS20_sf"/>
</dbReference>
<dbReference type="NCBIfam" id="TIGR00029">
    <property type="entry name" value="S20"/>
    <property type="match status" value="1"/>
</dbReference>
<dbReference type="PANTHER" id="PTHR33398">
    <property type="entry name" value="30S RIBOSOMAL PROTEIN S20"/>
    <property type="match status" value="1"/>
</dbReference>
<dbReference type="PANTHER" id="PTHR33398:SF1">
    <property type="entry name" value="SMALL RIBOSOMAL SUBUNIT PROTEIN BS20C"/>
    <property type="match status" value="1"/>
</dbReference>
<dbReference type="Pfam" id="PF01649">
    <property type="entry name" value="Ribosomal_S20p"/>
    <property type="match status" value="1"/>
</dbReference>
<dbReference type="SUPFAM" id="SSF46992">
    <property type="entry name" value="Ribosomal protein S20"/>
    <property type="match status" value="1"/>
</dbReference>
<gene>
    <name evidence="1" type="primary">rpsT</name>
    <name type="ordered locus">Bd1467</name>
</gene>